<organism>
    <name type="scientific">Caenorhabditis elegans</name>
    <dbReference type="NCBI Taxonomy" id="6239"/>
    <lineage>
        <taxon>Eukaryota</taxon>
        <taxon>Metazoa</taxon>
        <taxon>Ecdysozoa</taxon>
        <taxon>Nematoda</taxon>
        <taxon>Chromadorea</taxon>
        <taxon>Rhabditida</taxon>
        <taxon>Rhabditina</taxon>
        <taxon>Rhabditomorpha</taxon>
        <taxon>Rhabditoidea</taxon>
        <taxon>Rhabditidae</taxon>
        <taxon>Peloderinae</taxon>
        <taxon>Caenorhabditis</taxon>
    </lineage>
</organism>
<protein>
    <recommendedName>
        <fullName>Ubiquitin-conjugating enzyme E2 21</fullName>
        <ecNumber>2.3.2.23</ecNumber>
    </recommendedName>
    <alternativeName>
        <fullName>E2 ubiquitin-conjugating enzyme 21</fullName>
    </alternativeName>
    <alternativeName>
        <fullName>Ubiquitin carrier protein 21</fullName>
    </alternativeName>
    <alternativeName>
        <fullName>Ubiquitin-protein ligase 21</fullName>
    </alternativeName>
</protein>
<proteinExistence type="inferred from homology"/>
<feature type="chain" id="PRO_0000082518" description="Ubiquitin-conjugating enzyme E2 21">
    <location>
        <begin position="1"/>
        <end position="214"/>
    </location>
</feature>
<feature type="domain" description="UBC core" evidence="2">
    <location>
        <begin position="21"/>
        <end position="168"/>
    </location>
</feature>
<feature type="domain" description="UBA" evidence="1">
    <location>
        <begin position="172"/>
        <end position="214"/>
    </location>
</feature>
<feature type="active site" description="Glycyl thioester intermediate" evidence="2 3">
    <location>
        <position position="106"/>
    </location>
</feature>
<reference key="1">
    <citation type="journal article" date="1998" name="Science">
        <title>Genome sequence of the nematode C. elegans: a platform for investigating biology.</title>
        <authorList>
            <consortium name="The C. elegans sequencing consortium"/>
        </authorList>
    </citation>
    <scope>NUCLEOTIDE SEQUENCE [LARGE SCALE GENOMIC DNA]</scope>
    <source>
        <strain>Bristol N2</strain>
    </source>
</reference>
<reference key="2">
    <citation type="journal article" date="2022" name="Elife">
        <title>trim-21 promotes proteasomal degradation of CED-1 for apoptotic cell clearance in C. elegans.</title>
        <authorList>
            <person name="Yuan L."/>
            <person name="Li P."/>
            <person name="Jing H."/>
            <person name="Zheng Q."/>
            <person name="Xiao H."/>
        </authorList>
    </citation>
    <scope>FUNCTION</scope>
    <scope>DISRUPTION PHENOTYPE</scope>
</reference>
<comment type="function">
    <text evidence="4">Acts with E3 ubiquitin-protein ligase trim-21 to catalyze the 'Lys-48'-linked polyubiquitination of ced-1, promoting its proteasomal degradation to maintain appropriate ced-1 levels for apoptotic cell clearance.</text>
</comment>
<comment type="catalytic activity">
    <reaction evidence="2 3">
        <text>S-ubiquitinyl-[E1 ubiquitin-activating enzyme]-L-cysteine + [E2 ubiquitin-conjugating enzyme]-L-cysteine = [E1 ubiquitin-activating enzyme]-L-cysteine + S-ubiquitinyl-[E2 ubiquitin-conjugating enzyme]-L-cysteine.</text>
        <dbReference type="EC" id="2.3.2.23"/>
    </reaction>
</comment>
<comment type="pathway">
    <text evidence="2">Protein modification; protein ubiquitination.</text>
</comment>
<comment type="disruption phenotype">
    <text evidence="4">RNAi-mediated knockdown results in increased levels of ced-1.</text>
</comment>
<comment type="similarity">
    <text evidence="2">Belongs to the ubiquitin-conjugating enzyme family.</text>
</comment>
<accession>P52484</accession>
<name>UBC21_CAEEL</name>
<evidence type="ECO:0000255" key="1">
    <source>
        <dbReference type="PROSITE-ProRule" id="PRU00212"/>
    </source>
</evidence>
<evidence type="ECO:0000255" key="2">
    <source>
        <dbReference type="PROSITE-ProRule" id="PRU00388"/>
    </source>
</evidence>
<evidence type="ECO:0000255" key="3">
    <source>
        <dbReference type="PROSITE-ProRule" id="PRU10133"/>
    </source>
</evidence>
<evidence type="ECO:0000269" key="4">
    <source>
    </source>
</evidence>
<gene>
    <name type="primary">ubc-21</name>
    <name type="ORF">C06E2.3</name>
</gene>
<sequence>MSVSKLNKMQFSDKMSNLALARVTRKCKEVANASDITEAGIHVEIKENNLMDIKGFIKGPEGTPYAGGTFEIKVDIPEHYPFEPPKAKFVTRIWHPNISSQTGTICLDILKDKWTASLTLRTVLLSLQAMLCSPEPSDPQDAVVAKQFINNYPMFTATAVYWTSYFANSKKDVEPDFNRKVGRLIEMGIRETEAIVYLSCNNWKLEQALQFIFD</sequence>
<keyword id="KW-0067">ATP-binding</keyword>
<keyword id="KW-0547">Nucleotide-binding</keyword>
<keyword id="KW-1185">Reference proteome</keyword>
<keyword id="KW-0808">Transferase</keyword>
<keyword id="KW-0833">Ubl conjugation pathway</keyword>
<dbReference type="EC" id="2.3.2.23"/>
<dbReference type="EMBL" id="FO080381">
    <property type="protein sequence ID" value="CCD63324.1"/>
    <property type="molecule type" value="Genomic_DNA"/>
</dbReference>
<dbReference type="PIR" id="T15432">
    <property type="entry name" value="T15432"/>
</dbReference>
<dbReference type="RefSeq" id="NP_509502.3">
    <property type="nucleotide sequence ID" value="NM_077101.4"/>
</dbReference>
<dbReference type="SMR" id="P52484"/>
<dbReference type="BioGRID" id="47176">
    <property type="interactions" value="1"/>
</dbReference>
<dbReference type="FunCoup" id="P52484">
    <property type="interactions" value="3411"/>
</dbReference>
<dbReference type="STRING" id="6239.C06E2.3.1"/>
<dbReference type="PaxDb" id="6239-C06E2.3"/>
<dbReference type="PeptideAtlas" id="P52484"/>
<dbReference type="EnsemblMetazoa" id="C06E2.3.1">
    <property type="protein sequence ID" value="C06E2.3.1"/>
    <property type="gene ID" value="WBGene00006716"/>
</dbReference>
<dbReference type="GeneID" id="182321"/>
<dbReference type="KEGG" id="cel:CELE_C06E2.3"/>
<dbReference type="UCSC" id="C06E2.3">
    <property type="organism name" value="c. elegans"/>
</dbReference>
<dbReference type="AGR" id="WB:WBGene00006716"/>
<dbReference type="CTD" id="182321"/>
<dbReference type="WormBase" id="C06E2.3">
    <property type="protein sequence ID" value="CE46306"/>
    <property type="gene ID" value="WBGene00006716"/>
    <property type="gene designation" value="ubc-21"/>
</dbReference>
<dbReference type="eggNOG" id="KOG0418">
    <property type="taxonomic scope" value="Eukaryota"/>
</dbReference>
<dbReference type="HOGENOM" id="CLU_030988_13_1_1"/>
<dbReference type="InParanoid" id="P52484"/>
<dbReference type="OMA" id="WTHAYAG"/>
<dbReference type="OrthoDB" id="9993688at2759"/>
<dbReference type="PhylomeDB" id="P52484"/>
<dbReference type="UniPathway" id="UPA00143"/>
<dbReference type="PRO" id="PR:P52484"/>
<dbReference type="Proteomes" id="UP000001940">
    <property type="component" value="Chromosome X"/>
</dbReference>
<dbReference type="Bgee" id="WBGene00006716">
    <property type="expression patterns" value="Expressed in larva"/>
</dbReference>
<dbReference type="GO" id="GO:0005634">
    <property type="term" value="C:nucleus"/>
    <property type="evidence" value="ECO:0000318"/>
    <property type="project" value="GO_Central"/>
</dbReference>
<dbReference type="GO" id="GO:0005524">
    <property type="term" value="F:ATP binding"/>
    <property type="evidence" value="ECO:0007669"/>
    <property type="project" value="UniProtKB-KW"/>
</dbReference>
<dbReference type="GO" id="GO:0061631">
    <property type="term" value="F:ubiquitin conjugating enzyme activity"/>
    <property type="evidence" value="ECO:0000318"/>
    <property type="project" value="GO_Central"/>
</dbReference>
<dbReference type="GO" id="GO:0000209">
    <property type="term" value="P:protein polyubiquitination"/>
    <property type="evidence" value="ECO:0000318"/>
    <property type="project" value="GO_Central"/>
</dbReference>
<dbReference type="CDD" id="cd14313">
    <property type="entry name" value="UBA_II_E2_UBE2K_like"/>
    <property type="match status" value="1"/>
</dbReference>
<dbReference type="CDD" id="cd23800">
    <property type="entry name" value="UBCc_UBE2K"/>
    <property type="match status" value="1"/>
</dbReference>
<dbReference type="FunFam" id="1.10.8.10:FF:000010">
    <property type="entry name" value="Putative ubiquitin-conjugating enzyme e2 k"/>
    <property type="match status" value="1"/>
</dbReference>
<dbReference type="FunFam" id="3.10.110.10:FF:000037">
    <property type="entry name" value="ubiquitin-conjugating enzyme E2 27"/>
    <property type="match status" value="1"/>
</dbReference>
<dbReference type="Gene3D" id="1.10.8.10">
    <property type="entry name" value="DNA helicase RuvA subunit, C-terminal domain"/>
    <property type="match status" value="1"/>
</dbReference>
<dbReference type="Gene3D" id="3.10.110.10">
    <property type="entry name" value="Ubiquitin Conjugating Enzyme"/>
    <property type="match status" value="1"/>
</dbReference>
<dbReference type="InterPro" id="IPR015940">
    <property type="entry name" value="UBA"/>
</dbReference>
<dbReference type="InterPro" id="IPR009060">
    <property type="entry name" value="UBA-like_sf"/>
</dbReference>
<dbReference type="InterPro" id="IPR000608">
    <property type="entry name" value="UBQ-conjugat_E2_core"/>
</dbReference>
<dbReference type="InterPro" id="IPR023313">
    <property type="entry name" value="UBQ-conjugating_AS"/>
</dbReference>
<dbReference type="InterPro" id="IPR016135">
    <property type="entry name" value="UBQ-conjugating_enzyme/RWD"/>
</dbReference>
<dbReference type="PANTHER" id="PTHR24068">
    <property type="entry name" value="UBIQUITIN-CONJUGATING ENZYME E2"/>
    <property type="match status" value="1"/>
</dbReference>
<dbReference type="Pfam" id="PF00179">
    <property type="entry name" value="UQ_con"/>
    <property type="match status" value="1"/>
</dbReference>
<dbReference type="SMART" id="SM00212">
    <property type="entry name" value="UBCc"/>
    <property type="match status" value="1"/>
</dbReference>
<dbReference type="SUPFAM" id="SSF46934">
    <property type="entry name" value="UBA-like"/>
    <property type="match status" value="1"/>
</dbReference>
<dbReference type="SUPFAM" id="SSF54495">
    <property type="entry name" value="UBC-like"/>
    <property type="match status" value="1"/>
</dbReference>
<dbReference type="PROSITE" id="PS50030">
    <property type="entry name" value="UBA"/>
    <property type="match status" value="1"/>
</dbReference>
<dbReference type="PROSITE" id="PS00183">
    <property type="entry name" value="UBC_1"/>
    <property type="match status" value="1"/>
</dbReference>
<dbReference type="PROSITE" id="PS50127">
    <property type="entry name" value="UBC_2"/>
    <property type="match status" value="1"/>
</dbReference>